<dbReference type="EMBL" id="Z73026">
    <property type="protein sequence ID" value="CAA97271.1"/>
    <property type="molecule type" value="Genomic_DNA"/>
</dbReference>
<dbReference type="EMBL" id="AY693256">
    <property type="protein sequence ID" value="AAT93275.1"/>
    <property type="molecule type" value="Genomic_DNA"/>
</dbReference>
<dbReference type="PIR" id="S64568">
    <property type="entry name" value="S64568"/>
</dbReference>
<dbReference type="DIP" id="DIP-2674N"/>
<dbReference type="IntAct" id="P53310">
    <property type="interactions" value="1"/>
</dbReference>
<dbReference type="MINT" id="P53310"/>
<dbReference type="STRING" id="4932.YGR242W"/>
<dbReference type="iPTMnet" id="P53310"/>
<dbReference type="PaxDb" id="4932-YGR242W"/>
<dbReference type="EnsemblFungi" id="YGR242W_mRNA">
    <property type="protein sequence ID" value="YGR242W"/>
    <property type="gene ID" value="YGR242W"/>
</dbReference>
<dbReference type="AGR" id="SGD:S000003474"/>
<dbReference type="SGD" id="S000003474">
    <property type="gene designation" value="YGR242W"/>
</dbReference>
<dbReference type="HOGENOM" id="CLU_2279653_0_0_1"/>
<dbReference type="GO" id="GO:0016020">
    <property type="term" value="C:membrane"/>
    <property type="evidence" value="ECO:0007669"/>
    <property type="project" value="UniProtKB-SubCell"/>
</dbReference>
<organism>
    <name type="scientific">Saccharomyces cerevisiae (strain ATCC 204508 / S288c)</name>
    <name type="common">Baker's yeast</name>
    <dbReference type="NCBI Taxonomy" id="559292"/>
    <lineage>
        <taxon>Eukaryota</taxon>
        <taxon>Fungi</taxon>
        <taxon>Dikarya</taxon>
        <taxon>Ascomycota</taxon>
        <taxon>Saccharomycotina</taxon>
        <taxon>Saccharomycetes</taxon>
        <taxon>Saccharomycetales</taxon>
        <taxon>Saccharomycetaceae</taxon>
        <taxon>Saccharomyces</taxon>
    </lineage>
</organism>
<proteinExistence type="uncertain"/>
<feature type="chain" id="PRO_0000202857" description="Putative uncharacterized protein YGR242W">
    <location>
        <begin position="1"/>
        <end position="102"/>
    </location>
</feature>
<feature type="transmembrane region" description="Helical" evidence="1">
    <location>
        <begin position="29"/>
        <end position="52"/>
    </location>
</feature>
<reference key="1">
    <citation type="journal article" date="1997" name="Yeast">
        <title>Sequencing of a 9.9 kb segment on the right arm of yeast chromosome VII reveals four open reading frames, including PFK1, the gene coding for succinyl-CoA synthetase (beta-chain) and two ORFs sharing homology with ORFs of the yeast chromosome VIII.</title>
        <authorList>
            <person name="Guerreiro P."/>
            <person name="Azevedo D."/>
            <person name="Barreiros T."/>
            <person name="Rodrigues-Pousada C."/>
        </authorList>
    </citation>
    <scope>NUCLEOTIDE SEQUENCE [GENOMIC DNA]</scope>
    <source>
        <strain>ATCC 204508 / S288c</strain>
    </source>
</reference>
<reference key="2">
    <citation type="journal article" date="1997" name="Nature">
        <title>The nucleotide sequence of Saccharomyces cerevisiae chromosome VII.</title>
        <authorList>
            <person name="Tettelin H."/>
            <person name="Agostoni-Carbone M.L."/>
            <person name="Albermann K."/>
            <person name="Albers M."/>
            <person name="Arroyo J."/>
            <person name="Backes U."/>
            <person name="Barreiros T."/>
            <person name="Bertani I."/>
            <person name="Bjourson A.J."/>
            <person name="Brueckner M."/>
            <person name="Bruschi C.V."/>
            <person name="Carignani G."/>
            <person name="Castagnoli L."/>
            <person name="Cerdan E."/>
            <person name="Clemente M.L."/>
            <person name="Coblenz A."/>
            <person name="Coglievina M."/>
            <person name="Coissac E."/>
            <person name="Defoor E."/>
            <person name="Del Bino S."/>
            <person name="Delius H."/>
            <person name="Delneri D."/>
            <person name="de Wergifosse P."/>
            <person name="Dujon B."/>
            <person name="Durand P."/>
            <person name="Entian K.-D."/>
            <person name="Eraso P."/>
            <person name="Escribano V."/>
            <person name="Fabiani L."/>
            <person name="Fartmann B."/>
            <person name="Feroli F."/>
            <person name="Feuermann M."/>
            <person name="Frontali L."/>
            <person name="Garcia-Gonzalez M."/>
            <person name="Garcia-Saez M.I."/>
            <person name="Goffeau A."/>
            <person name="Guerreiro P."/>
            <person name="Hani J."/>
            <person name="Hansen M."/>
            <person name="Hebling U."/>
            <person name="Hernandez K."/>
            <person name="Heumann K."/>
            <person name="Hilger F."/>
            <person name="Hofmann B."/>
            <person name="Indge K.J."/>
            <person name="James C.M."/>
            <person name="Klima R."/>
            <person name="Koetter P."/>
            <person name="Kramer B."/>
            <person name="Kramer W."/>
            <person name="Lauquin G."/>
            <person name="Leuther H."/>
            <person name="Louis E.J."/>
            <person name="Maillier E."/>
            <person name="Marconi A."/>
            <person name="Martegani E."/>
            <person name="Mazon M.J."/>
            <person name="Mazzoni C."/>
            <person name="McReynolds A.D.K."/>
            <person name="Melchioretto P."/>
            <person name="Mewes H.-W."/>
            <person name="Minenkova O."/>
            <person name="Mueller-Auer S."/>
            <person name="Nawrocki A."/>
            <person name="Netter P."/>
            <person name="Neu R."/>
            <person name="Nombela C."/>
            <person name="Oliver S.G."/>
            <person name="Panzeri L."/>
            <person name="Paoluzi S."/>
            <person name="Plevani P."/>
            <person name="Portetelle D."/>
            <person name="Portillo F."/>
            <person name="Potier S."/>
            <person name="Purnelle B."/>
            <person name="Rieger M."/>
            <person name="Riles L."/>
            <person name="Rinaldi T."/>
            <person name="Robben J."/>
            <person name="Rodrigues-Pousada C."/>
            <person name="Rodriguez-Belmonte E."/>
            <person name="Rodriguez-Torres A.M."/>
            <person name="Rose M."/>
            <person name="Ruzzi M."/>
            <person name="Saliola M."/>
            <person name="Sanchez-Perez M."/>
            <person name="Schaefer B."/>
            <person name="Schaefer M."/>
            <person name="Scharfe M."/>
            <person name="Schmidheini T."/>
            <person name="Schreer A."/>
            <person name="Skala J."/>
            <person name="Souciet J.-L."/>
            <person name="Steensma H.Y."/>
            <person name="Talla E."/>
            <person name="Thierry A."/>
            <person name="Vandenbol M."/>
            <person name="van der Aart Q.J.M."/>
            <person name="Van Dyck L."/>
            <person name="Vanoni M."/>
            <person name="Verhasselt P."/>
            <person name="Voet M."/>
            <person name="Volckaert G."/>
            <person name="Wambutt R."/>
            <person name="Watson M.D."/>
            <person name="Weber N."/>
            <person name="Wedler E."/>
            <person name="Wedler H."/>
            <person name="Wipfli P."/>
            <person name="Wolf K."/>
            <person name="Wright L.F."/>
            <person name="Zaccaria P."/>
            <person name="Zimmermann M."/>
            <person name="Zollner A."/>
            <person name="Kleine K."/>
        </authorList>
    </citation>
    <scope>NUCLEOTIDE SEQUENCE [LARGE SCALE GENOMIC DNA]</scope>
    <source>
        <strain>ATCC 204508 / S288c</strain>
    </source>
</reference>
<reference key="3">
    <citation type="journal article" date="2014" name="G3 (Bethesda)">
        <title>The reference genome sequence of Saccharomyces cerevisiae: Then and now.</title>
        <authorList>
            <person name="Engel S.R."/>
            <person name="Dietrich F.S."/>
            <person name="Fisk D.G."/>
            <person name="Binkley G."/>
            <person name="Balakrishnan R."/>
            <person name="Costanzo M.C."/>
            <person name="Dwight S.S."/>
            <person name="Hitz B.C."/>
            <person name="Karra K."/>
            <person name="Nash R.S."/>
            <person name="Weng S."/>
            <person name="Wong E.D."/>
            <person name="Lloyd P."/>
            <person name="Skrzypek M.S."/>
            <person name="Miyasato S.R."/>
            <person name="Simison M."/>
            <person name="Cherry J.M."/>
        </authorList>
    </citation>
    <scope>GENOME REANNOTATION</scope>
    <source>
        <strain>ATCC 204508 / S288c</strain>
    </source>
</reference>
<reference key="4">
    <citation type="journal article" date="2007" name="Genome Res.">
        <title>Approaching a complete repository of sequence-verified protein-encoding clones for Saccharomyces cerevisiae.</title>
        <authorList>
            <person name="Hu Y."/>
            <person name="Rolfs A."/>
            <person name="Bhullar B."/>
            <person name="Murthy T.V.S."/>
            <person name="Zhu C."/>
            <person name="Berger M.F."/>
            <person name="Camargo A.A."/>
            <person name="Kelley F."/>
            <person name="McCarron S."/>
            <person name="Jepson D."/>
            <person name="Richardson A."/>
            <person name="Raphael J."/>
            <person name="Moreira D."/>
            <person name="Taycher E."/>
            <person name="Zuo D."/>
            <person name="Mohr S."/>
            <person name="Kane M.F."/>
            <person name="Williamson J."/>
            <person name="Simpson A.J.G."/>
            <person name="Bulyk M.L."/>
            <person name="Harlow E."/>
            <person name="Marsischky G."/>
            <person name="Kolodner R.D."/>
            <person name="LaBaer J."/>
        </authorList>
    </citation>
    <scope>NUCLEOTIDE SEQUENCE [GENOMIC DNA]</scope>
    <source>
        <strain>ATCC 204508 / S288c</strain>
    </source>
</reference>
<comment type="subcellular location">
    <subcellularLocation>
        <location evidence="2">Membrane</location>
        <topology evidence="2">Single-pass membrane protein</topology>
    </subcellularLocation>
</comment>
<comment type="miscellaneous">
    <text evidence="2">Partially overlaps YAP1802.</text>
</comment>
<comment type="caution">
    <text evidence="3">Product of a dubious gene prediction unlikely to encode a functional protein. Because of that it is not part of the S.cerevisiae S288c complete/reference proteome set.</text>
</comment>
<protein>
    <recommendedName>
        <fullName>Putative uncharacterized protein YGR242W</fullName>
    </recommendedName>
</protein>
<keyword id="KW-0472">Membrane</keyword>
<keyword id="KW-0812">Transmembrane</keyword>
<keyword id="KW-1133">Transmembrane helix</keyword>
<sequence length="102" mass="11551">MVQAVSDNLISNAWVISCNPLALEVPERIGSTYFCFGGAIFILVAPLTNLVYNEDIVSQTRLYIYYRGSRDSRACMLDIVTLVDVSKRSKLVLLLQIYFFSF</sequence>
<gene>
    <name type="ordered locus">YGR242W</name>
</gene>
<evidence type="ECO:0000255" key="1"/>
<evidence type="ECO:0000305" key="2"/>
<evidence type="ECO:0000305" key="3">
    <source>
    </source>
</evidence>
<accession>P53310</accession>
<name>YG55_YEAST</name>